<feature type="chain" id="PRO_1000142153" description="Large ribosomal subunit protein uL4">
    <location>
        <begin position="1"/>
        <end position="206"/>
    </location>
</feature>
<proteinExistence type="inferred from homology"/>
<comment type="function">
    <text evidence="1">One of the primary rRNA binding proteins, this protein initially binds near the 5'-end of the 23S rRNA. It is important during the early stages of 50S assembly. It makes multiple contacts with different domains of the 23S rRNA in the assembled 50S subunit and ribosome.</text>
</comment>
<comment type="function">
    <text evidence="1">Forms part of the polypeptide exit tunnel.</text>
</comment>
<comment type="subunit">
    <text evidence="1">Part of the 50S ribosomal subunit.</text>
</comment>
<comment type="similarity">
    <text evidence="1">Belongs to the universal ribosomal protein uL4 family.</text>
</comment>
<sequence length="206" mass="22547">MKLDITTLDGGSAGSLELNEAIFGLEPRADILQRMVRYQLAKRRAGTHAVKNRSDVDRTTKKLYKQKGTGNARHGAASAPQFRGGGRAFGPVVRDHSHDLPKKVRALALKHALSSKAKTSTLIVVDDIKVDSHKTKAMIERFEKLGLSSALIIGGSEVDENFGRAARAIPKIDVLPVQGINVYDILRRDTLVLTRAAVDALEERFK</sequence>
<accession>B1ZLK5</accession>
<name>RL4_METPB</name>
<dbReference type="EMBL" id="CP001029">
    <property type="protein sequence ID" value="ACB80286.1"/>
    <property type="molecule type" value="Genomic_DNA"/>
</dbReference>
<dbReference type="RefSeq" id="WP_012454027.1">
    <property type="nucleotide sequence ID" value="NC_010725.1"/>
</dbReference>
<dbReference type="SMR" id="B1ZLK5"/>
<dbReference type="STRING" id="441620.Mpop_2124"/>
<dbReference type="KEGG" id="mpo:Mpop_2124"/>
<dbReference type="eggNOG" id="COG0088">
    <property type="taxonomic scope" value="Bacteria"/>
</dbReference>
<dbReference type="HOGENOM" id="CLU_041575_5_1_5"/>
<dbReference type="OrthoDB" id="9803201at2"/>
<dbReference type="Proteomes" id="UP000007136">
    <property type="component" value="Chromosome"/>
</dbReference>
<dbReference type="GO" id="GO:1990904">
    <property type="term" value="C:ribonucleoprotein complex"/>
    <property type="evidence" value="ECO:0007669"/>
    <property type="project" value="UniProtKB-KW"/>
</dbReference>
<dbReference type="GO" id="GO:0005840">
    <property type="term" value="C:ribosome"/>
    <property type="evidence" value="ECO:0007669"/>
    <property type="project" value="UniProtKB-KW"/>
</dbReference>
<dbReference type="GO" id="GO:0019843">
    <property type="term" value="F:rRNA binding"/>
    <property type="evidence" value="ECO:0007669"/>
    <property type="project" value="UniProtKB-UniRule"/>
</dbReference>
<dbReference type="GO" id="GO:0003735">
    <property type="term" value="F:structural constituent of ribosome"/>
    <property type="evidence" value="ECO:0007669"/>
    <property type="project" value="InterPro"/>
</dbReference>
<dbReference type="GO" id="GO:0006412">
    <property type="term" value="P:translation"/>
    <property type="evidence" value="ECO:0007669"/>
    <property type="project" value="UniProtKB-UniRule"/>
</dbReference>
<dbReference type="Gene3D" id="3.40.1370.10">
    <property type="match status" value="1"/>
</dbReference>
<dbReference type="HAMAP" id="MF_01328_B">
    <property type="entry name" value="Ribosomal_uL4_B"/>
    <property type="match status" value="1"/>
</dbReference>
<dbReference type="InterPro" id="IPR002136">
    <property type="entry name" value="Ribosomal_uL4"/>
</dbReference>
<dbReference type="InterPro" id="IPR013005">
    <property type="entry name" value="Ribosomal_uL4-like"/>
</dbReference>
<dbReference type="InterPro" id="IPR023574">
    <property type="entry name" value="Ribosomal_uL4_dom_sf"/>
</dbReference>
<dbReference type="NCBIfam" id="TIGR03953">
    <property type="entry name" value="rplD_bact"/>
    <property type="match status" value="1"/>
</dbReference>
<dbReference type="PANTHER" id="PTHR10746">
    <property type="entry name" value="50S RIBOSOMAL PROTEIN L4"/>
    <property type="match status" value="1"/>
</dbReference>
<dbReference type="PANTHER" id="PTHR10746:SF6">
    <property type="entry name" value="LARGE RIBOSOMAL SUBUNIT PROTEIN UL4M"/>
    <property type="match status" value="1"/>
</dbReference>
<dbReference type="Pfam" id="PF00573">
    <property type="entry name" value="Ribosomal_L4"/>
    <property type="match status" value="1"/>
</dbReference>
<dbReference type="SUPFAM" id="SSF52166">
    <property type="entry name" value="Ribosomal protein L4"/>
    <property type="match status" value="1"/>
</dbReference>
<reference key="1">
    <citation type="submission" date="2008-04" db="EMBL/GenBank/DDBJ databases">
        <title>Complete sequence of chromosome of Methylobacterium populi BJ001.</title>
        <authorList>
            <consortium name="US DOE Joint Genome Institute"/>
            <person name="Copeland A."/>
            <person name="Lucas S."/>
            <person name="Lapidus A."/>
            <person name="Glavina del Rio T."/>
            <person name="Dalin E."/>
            <person name="Tice H."/>
            <person name="Bruce D."/>
            <person name="Goodwin L."/>
            <person name="Pitluck S."/>
            <person name="Chertkov O."/>
            <person name="Brettin T."/>
            <person name="Detter J.C."/>
            <person name="Han C."/>
            <person name="Kuske C.R."/>
            <person name="Schmutz J."/>
            <person name="Larimer F."/>
            <person name="Land M."/>
            <person name="Hauser L."/>
            <person name="Kyrpides N."/>
            <person name="Mikhailova N."/>
            <person name="Marx C."/>
            <person name="Richardson P."/>
        </authorList>
    </citation>
    <scope>NUCLEOTIDE SEQUENCE [LARGE SCALE GENOMIC DNA]</scope>
    <source>
        <strain>ATCC BAA-705 / NCIMB 13946 / BJ001</strain>
    </source>
</reference>
<keyword id="KW-0687">Ribonucleoprotein</keyword>
<keyword id="KW-0689">Ribosomal protein</keyword>
<keyword id="KW-0694">RNA-binding</keyword>
<keyword id="KW-0699">rRNA-binding</keyword>
<organism>
    <name type="scientific">Methylorubrum populi (strain ATCC BAA-705 / NCIMB 13946 / BJ001)</name>
    <name type="common">Methylobacterium populi</name>
    <dbReference type="NCBI Taxonomy" id="441620"/>
    <lineage>
        <taxon>Bacteria</taxon>
        <taxon>Pseudomonadati</taxon>
        <taxon>Pseudomonadota</taxon>
        <taxon>Alphaproteobacteria</taxon>
        <taxon>Hyphomicrobiales</taxon>
        <taxon>Methylobacteriaceae</taxon>
        <taxon>Methylorubrum</taxon>
    </lineage>
</organism>
<gene>
    <name evidence="1" type="primary">rplD</name>
    <name type="ordered locus">Mpop_2124</name>
</gene>
<protein>
    <recommendedName>
        <fullName evidence="1">Large ribosomal subunit protein uL4</fullName>
    </recommendedName>
    <alternativeName>
        <fullName evidence="2">50S ribosomal protein L4</fullName>
    </alternativeName>
</protein>
<evidence type="ECO:0000255" key="1">
    <source>
        <dbReference type="HAMAP-Rule" id="MF_01328"/>
    </source>
</evidence>
<evidence type="ECO:0000305" key="2"/>